<sequence>MFHIGSLVVLCGLLAPTTALLEALPTPLGQTLPLAVTPALAPSPPDLAGSLTGALSNGLLSEGLLGILENLPLLDILKTRGNAPSGLLGSLLGKVTSLTPLLNNIIELKITNPQLLELGLVQSPDGHRLYVTIPLGMILNVKTSLVGSLLKLAVKLNITVELLAVTDEQKHVHLVVGNCTHSPGSLQIFLLDGLGSLPIQSFVDNLTGILNDVLPGLVQGKVCPLVNAVLSRLDVTLVHSIVNALIHGLQFVIKV</sequence>
<reference key="1">
    <citation type="journal article" date="2002" name="Biochim. Biophys. Acta">
        <title>The BSP30 salivary proteins from cattle, LUNX/PLUNC and von Ebner's minor salivary gland protein are members of the PSP/LBP superfamily of proteins.</title>
        <authorList>
            <person name="Wheeler T.T."/>
            <person name="Haigh B.J."/>
            <person name="McCracken J.Y."/>
            <person name="Wilkins R.J."/>
            <person name="Morris C.A."/>
            <person name="Grigor M.R."/>
        </authorList>
    </citation>
    <scope>NUCLEOTIDE SEQUENCE [MRNA]</scope>
    <scope>TISSUE SPECIFICITY</scope>
    <source>
        <tissue>Tonsil</tissue>
    </source>
</reference>
<reference key="2">
    <citation type="submission" date="2006-04" db="EMBL/GenBank/DDBJ databases">
        <authorList>
            <consortium name="NIH - Mammalian Gene Collection (MGC) project"/>
        </authorList>
    </citation>
    <scope>NUCLEOTIDE SEQUENCE [LARGE SCALE MRNA]</scope>
    <source>
        <strain>Hereford</strain>
        <tissue>Thymus</tissue>
    </source>
</reference>
<dbReference type="EMBL" id="AF488706">
    <property type="protein sequence ID" value="AAM00907.1"/>
    <property type="molecule type" value="mRNA"/>
</dbReference>
<dbReference type="EMBL" id="BC114803">
    <property type="protein sequence ID" value="AAI14804.1"/>
    <property type="molecule type" value="mRNA"/>
</dbReference>
<dbReference type="RefSeq" id="NP_776851.1">
    <property type="nucleotide sequence ID" value="NM_174426.3"/>
</dbReference>
<dbReference type="SMR" id="Q8SPU5"/>
<dbReference type="FunCoup" id="Q8SPU5">
    <property type="interactions" value="70"/>
</dbReference>
<dbReference type="STRING" id="9913.ENSBTAP00000069828"/>
<dbReference type="GlyCosmos" id="Q8SPU5">
    <property type="glycosylation" value="3 sites, No reported glycans"/>
</dbReference>
<dbReference type="GlyGen" id="Q8SPU5">
    <property type="glycosylation" value="3 sites"/>
</dbReference>
<dbReference type="PaxDb" id="9913-ENSBTAP00000022728"/>
<dbReference type="Ensembl" id="ENSBTAT00000022728.6">
    <property type="protein sequence ID" value="ENSBTAP00000022728.4"/>
    <property type="gene ID" value="ENSBTAG00000017098.6"/>
</dbReference>
<dbReference type="GeneID" id="281989"/>
<dbReference type="KEGG" id="bta:281989"/>
<dbReference type="CTD" id="51297"/>
<dbReference type="VEuPathDB" id="HostDB:ENSBTAG00000017098"/>
<dbReference type="VGNC" id="VGNC:26543">
    <property type="gene designation" value="BPIFA1"/>
</dbReference>
<dbReference type="eggNOG" id="ENOG502SR58">
    <property type="taxonomic scope" value="Eukaryota"/>
</dbReference>
<dbReference type="GeneTree" id="ENSGT01100000263546"/>
<dbReference type="HOGENOM" id="CLU_095915_0_0_1"/>
<dbReference type="InParanoid" id="Q8SPU5"/>
<dbReference type="OMA" id="ANMLIHG"/>
<dbReference type="OrthoDB" id="9835719at2759"/>
<dbReference type="TreeFam" id="TF337052"/>
<dbReference type="Reactome" id="R-BTA-6803157">
    <property type="pathway name" value="Antimicrobial peptides"/>
</dbReference>
<dbReference type="Proteomes" id="UP000009136">
    <property type="component" value="Chromosome 13"/>
</dbReference>
<dbReference type="Bgee" id="ENSBTAG00000017098">
    <property type="expression patterns" value="Expressed in olfactory segment of nasal mucosa and 35 other cell types or tissues"/>
</dbReference>
<dbReference type="GO" id="GO:0005576">
    <property type="term" value="C:extracellular region"/>
    <property type="evidence" value="ECO:0000250"/>
    <property type="project" value="UniProtKB"/>
</dbReference>
<dbReference type="GO" id="GO:0005615">
    <property type="term" value="C:extracellular space"/>
    <property type="evidence" value="ECO:0000250"/>
    <property type="project" value="UniProtKB"/>
</dbReference>
<dbReference type="GO" id="GO:0008289">
    <property type="term" value="F:lipid binding"/>
    <property type="evidence" value="ECO:0007669"/>
    <property type="project" value="UniProtKB-KW"/>
</dbReference>
<dbReference type="GO" id="GO:0019731">
    <property type="term" value="P:antibacterial humoral response"/>
    <property type="evidence" value="ECO:0000250"/>
    <property type="project" value="UniProtKB"/>
</dbReference>
<dbReference type="GO" id="GO:0061844">
    <property type="term" value="P:antimicrobial humoral immune response mediated by antimicrobial peptide"/>
    <property type="evidence" value="ECO:0000318"/>
    <property type="project" value="GO_Central"/>
</dbReference>
<dbReference type="GO" id="GO:0051607">
    <property type="term" value="P:defense response to virus"/>
    <property type="evidence" value="ECO:0007669"/>
    <property type="project" value="Ensembl"/>
</dbReference>
<dbReference type="GO" id="GO:0002395">
    <property type="term" value="P:immune response in nasopharyngeal-associated lymphoid tissue"/>
    <property type="evidence" value="ECO:0000318"/>
    <property type="project" value="GO_Central"/>
</dbReference>
<dbReference type="GO" id="GO:0045087">
    <property type="term" value="P:innate immune response"/>
    <property type="evidence" value="ECO:0000250"/>
    <property type="project" value="UniProtKB"/>
</dbReference>
<dbReference type="GO" id="GO:0050891">
    <property type="term" value="P:multicellular organismal-level water homeostasis"/>
    <property type="evidence" value="ECO:0000250"/>
    <property type="project" value="UniProtKB"/>
</dbReference>
<dbReference type="GO" id="GO:1900229">
    <property type="term" value="P:negative regulation of single-species biofilm formation in or on host organism"/>
    <property type="evidence" value="ECO:0000250"/>
    <property type="project" value="UniProtKB"/>
</dbReference>
<dbReference type="GO" id="GO:1902305">
    <property type="term" value="P:regulation of sodium ion transmembrane transport"/>
    <property type="evidence" value="ECO:0000250"/>
    <property type="project" value="UniProtKB"/>
</dbReference>
<dbReference type="GO" id="GO:0043129">
    <property type="term" value="P:surfactant homeostasis"/>
    <property type="evidence" value="ECO:0000250"/>
    <property type="project" value="UniProtKB"/>
</dbReference>
<dbReference type="FunFam" id="3.15.10.10:FF:000003">
    <property type="entry name" value="BPI fold-containing family A member 1"/>
    <property type="match status" value="1"/>
</dbReference>
<dbReference type="Gene3D" id="3.15.10.10">
    <property type="entry name" value="Bactericidal permeability-increasing protein, domain 1"/>
    <property type="match status" value="1"/>
</dbReference>
<dbReference type="InterPro" id="IPR017943">
    <property type="entry name" value="Bactericidal_perm-incr_a/b_dom"/>
</dbReference>
<dbReference type="InterPro" id="IPR051902">
    <property type="entry name" value="BPI_fold-superfamily_member"/>
</dbReference>
<dbReference type="InterPro" id="IPR017942">
    <property type="entry name" value="Lipid-bd_serum_glycop_N"/>
</dbReference>
<dbReference type="PANTHER" id="PTHR47015">
    <property type="entry name" value="BPI FOLD-CONTAINING FAMILY A MEMBER 1"/>
    <property type="match status" value="1"/>
</dbReference>
<dbReference type="PANTHER" id="PTHR47015:SF1">
    <property type="entry name" value="BPI FOLD-CONTAINING FAMILY A MEMBER 1"/>
    <property type="match status" value="1"/>
</dbReference>
<dbReference type="Pfam" id="PF01273">
    <property type="entry name" value="LBP_BPI_CETP"/>
    <property type="match status" value="1"/>
</dbReference>
<dbReference type="SUPFAM" id="SSF55394">
    <property type="entry name" value="Bactericidal permeability-increasing protein, BPI"/>
    <property type="match status" value="1"/>
</dbReference>
<keyword id="KW-0044">Antibiotic</keyword>
<keyword id="KW-0929">Antimicrobial</keyword>
<keyword id="KW-1015">Disulfide bond</keyword>
<keyword id="KW-0325">Glycoprotein</keyword>
<keyword id="KW-0391">Immunity</keyword>
<keyword id="KW-0399">Innate immunity</keyword>
<keyword id="KW-0446">Lipid-binding</keyword>
<keyword id="KW-1185">Reference proteome</keyword>
<keyword id="KW-0964">Secreted</keyword>
<keyword id="KW-0732">Signal</keyword>
<evidence type="ECO:0000250" key="1"/>
<evidence type="ECO:0000250" key="2">
    <source>
        <dbReference type="UniProtKB" id="Q9NP55"/>
    </source>
</evidence>
<evidence type="ECO:0000255" key="3"/>
<evidence type="ECO:0000269" key="4">
    <source>
    </source>
</evidence>
<evidence type="ECO:0000305" key="5"/>
<organism>
    <name type="scientific">Bos taurus</name>
    <name type="common">Bovine</name>
    <dbReference type="NCBI Taxonomy" id="9913"/>
    <lineage>
        <taxon>Eukaryota</taxon>
        <taxon>Metazoa</taxon>
        <taxon>Chordata</taxon>
        <taxon>Craniata</taxon>
        <taxon>Vertebrata</taxon>
        <taxon>Euteleostomi</taxon>
        <taxon>Mammalia</taxon>
        <taxon>Eutheria</taxon>
        <taxon>Laurasiatheria</taxon>
        <taxon>Artiodactyla</taxon>
        <taxon>Ruminantia</taxon>
        <taxon>Pecora</taxon>
        <taxon>Bovidae</taxon>
        <taxon>Bovinae</taxon>
        <taxon>Bos</taxon>
    </lineage>
</organism>
<name>BPIA1_BOVIN</name>
<protein>
    <recommendedName>
        <fullName>BPI fold-containing family A member 1</fullName>
    </recommendedName>
    <alternativeName>
        <fullName>Palate lung and nasal epithelium clone protein</fullName>
    </alternativeName>
</protein>
<accession>Q8SPU5</accession>
<accession>Q1RMN7</accession>
<feature type="signal peptide" evidence="3">
    <location>
        <begin position="1"/>
        <end position="19"/>
    </location>
</feature>
<feature type="chain" id="PRO_0000017174" description="BPI fold-containing family A member 1">
    <location>
        <begin position="20"/>
        <end position="255"/>
    </location>
</feature>
<feature type="region of interest" description="Important for surfactant activity and antibacterial properties" evidence="2">
    <location>
        <begin position="87"/>
        <end position="92"/>
    </location>
</feature>
<feature type="glycosylation site" description="N-linked (GlcNAc...) asparagine" evidence="3">
    <location>
        <position position="157"/>
    </location>
</feature>
<feature type="glycosylation site" description="N-linked (GlcNAc...) asparagine" evidence="3">
    <location>
        <position position="178"/>
    </location>
</feature>
<feature type="glycosylation site" description="N-linked (GlcNAc...) asparagine" evidence="3">
    <location>
        <position position="205"/>
    </location>
</feature>
<feature type="disulfide bond" evidence="2">
    <location>
        <begin position="179"/>
        <end position="223"/>
    </location>
</feature>
<proteinExistence type="evidence at transcript level"/>
<gene>
    <name type="primary">BPIFA1</name>
    <name type="synonym">PLUNC</name>
</gene>
<comment type="function">
    <text evidence="2">Lipid-binding protein which shows high specificity for the surfactant phospholipid dipalmitoylphosphatidylcholine (DPPC). Plays a role in the innate immune responses of the upper airways. Reduces the surface tension in secretions from airway epithelia and inhibits the formation of biofilm by pathogenic Gram-negative bacteria, such as P.aeruginosa and K.pneumoniae. Negatively regulates proteolytic cleavage of SCNN1G, an event that is required for activation of the epithelial sodium channel (ENaC), and thereby contributes to airway surface liquid homeostasis and proper clearance of mucus. Plays a role in the airway inflammatory response after exposure to irritants. May attract macrophages and neutrophils.</text>
</comment>
<comment type="subunit">
    <text evidence="1">Monomer. Interacts (via N-terminus) with SCNN1B, a subunit of the heterotrimeric epithelial sodium channel (ENaC); this inhibits proteolytic activation of ENaC (By similarity).</text>
</comment>
<comment type="subcellular location">
    <subcellularLocation>
        <location evidence="1">Secreted</location>
    </subcellularLocation>
    <text evidence="1">Apical side of airway epithelial cells. Detected in airway surface liquid, nasal mucus and sputum (By similarity).</text>
</comment>
<comment type="tissue specificity">
    <text evidence="4">Expressed in trachea, and at lower levels in nasal epithelium.</text>
</comment>
<comment type="similarity">
    <text evidence="5">Belongs to the BPI/LBP/Plunc superfamily. Plunc family.</text>
</comment>
<comment type="caution">
    <text evidence="2">Reported to bind to bacterial lipopolysaccharide (LPS) in vitro. However, the in vivo significance of this is uncertain since other studies indicate little or no specificity for LPS.</text>
</comment>